<gene>
    <name type="primary">GGT1</name>
    <name type="synonym">GGT</name>
</gene>
<keyword id="KW-0002">3D-structure</keyword>
<keyword id="KW-0012">Acyltransferase</keyword>
<keyword id="KW-0877">Alternative promoter usage</keyword>
<keyword id="KW-0025">Alternative splicing</keyword>
<keyword id="KW-1003">Cell membrane</keyword>
<keyword id="KW-0903">Direct protein sequencing</keyword>
<keyword id="KW-0225">Disease variant</keyword>
<keyword id="KW-1015">Disulfide bond</keyword>
<keyword id="KW-0317">Glutathione biosynthesis</keyword>
<keyword id="KW-0325">Glycoprotein</keyword>
<keyword id="KW-0378">Hydrolase</keyword>
<keyword id="KW-0991">Intellectual disability</keyword>
<keyword id="KW-0443">Lipid metabolism</keyword>
<keyword id="KW-0472">Membrane</keyword>
<keyword id="KW-0645">Protease</keyword>
<keyword id="KW-1267">Proteomics identification</keyword>
<keyword id="KW-1185">Reference proteome</keyword>
<keyword id="KW-0730">Sialic acid</keyword>
<keyword id="KW-0735">Signal-anchor</keyword>
<keyword id="KW-0808">Transferase</keyword>
<keyword id="KW-0812">Transmembrane</keyword>
<keyword id="KW-1133">Transmembrane helix</keyword>
<keyword id="KW-0865">Zymogen</keyword>
<sequence>MKKKLVVLGLLAVVLVLVIVGLCLWLPSASKEPDNHVYTRAAVAADAKQCSKIGRDALRDGGSAVDAAIAALLCVGLMNAHSMGIGGGLFLTIYNSTTRKAEVINAREVAPRLAFATMFNSSEQSQKGGLSVAVPGEIRGYELAHQRHGRLPWARLFQPSIQLARQGFPVGKGLAAALENKRTVIEQQPVLCEVFCRDRKVLREGERLTLPQLADTYETLAIEGAQAFYNGSLTAQIVKDIQAAGGIVTAEDLNNYRAELIEHPLNISLGDVVLYMPSAPLSGPVLALILNILKGYNFSRESVESPEQKGLTYHRIVEAFRFAYAKRTLLGDPKFVDVTEVVRNMTSEFFAAQLRAQISDDTTHPISYYKPEFYTPDDGGTAHLSVVAEDGSAVSATSTINLYFGSKVRSPVSGILFNNEMDDFSSPSITNEFGVPPSPANFIQPGKQPLSSMCPTIMVGQDGQVRMVVGAAGGTQITTATALAIIYNLWFGYDVKRAVEEPRLHNQLLPNVTTVERNIDQAVTAALETRHHHTQIASTFIAVVQAIVRTAGGWAAASDSRKGGEPAGY</sequence>
<comment type="function">
    <text evidence="4 9 10 12 16 21 23 24 25">Cleaves the gamma-glutamyl bond of extracellular glutathione (gamma-Glu-Cys-Gly), glutathione conjugates (such as maresin conjugate (13R)-S-glutathionyl-(14S)-hydroxy-(4Z,7Z,9E,11E,16Z,19Z)-docosahexaenoate, MCTR1) and other gamma-glutamyl compounds (such as leukotriene C4, LTC4) (PubMed:17924658, PubMed:21447318, PubMed:27791009). The metabolism of glutathione by GGT1 releases free glutamate and the dipeptide cysteinyl-glycine, which is hydrolyzed to cysteine and glycine by dipeptidases (PubMed:27791009). In the presence of high concentrations of dipeptides and some amino acids, can also catalyze a transpeptidation reaction, transferring the gamma-glutamyl moiety to an acceptor amino acid to form a new gamma-glutamyl compound (PubMed:17924658, PubMed:21447318, PubMed:7673200, PubMed:7759490, PubMed:8095045, PubMed:8827453). Contributes to cysteine homeostasis, glutathione homeostasis and in the conversion of the leukotriene LTC4 to LTD4.</text>
</comment>
<comment type="function">
    <molecule>Isoform 3</molecule>
    <text evidence="22">Seems to be catalytically inactive.</text>
</comment>
<comment type="catalytic activity">
    <reaction evidence="4 10 11 21 23 24 25">
        <text>an N-terminal (5-L-glutamyl)-[peptide] + an alpha-amino acid = 5-L-glutamyl amino acid + an N-terminal L-alpha-aminoacyl-[peptide]</text>
        <dbReference type="Rhea" id="RHEA:23904"/>
        <dbReference type="Rhea" id="RHEA-COMP:9780"/>
        <dbReference type="Rhea" id="RHEA-COMP:9795"/>
        <dbReference type="ChEBI" id="CHEBI:77644"/>
        <dbReference type="ChEBI" id="CHEBI:78597"/>
        <dbReference type="ChEBI" id="CHEBI:78599"/>
        <dbReference type="ChEBI" id="CHEBI:78608"/>
        <dbReference type="EC" id="2.3.2.2"/>
    </reaction>
    <physiologicalReaction direction="left-to-right" evidence="34">
        <dbReference type="Rhea" id="RHEA:23905"/>
    </physiologicalReaction>
    <physiologicalReaction direction="right-to-left" evidence="1">
        <dbReference type="Rhea" id="RHEA:23906"/>
    </physiologicalReaction>
</comment>
<comment type="catalytic activity">
    <reaction evidence="4 10">
        <text>glutathione + H2O = L-cysteinylglycine + L-glutamate</text>
        <dbReference type="Rhea" id="RHEA:28807"/>
        <dbReference type="ChEBI" id="CHEBI:15377"/>
        <dbReference type="ChEBI" id="CHEBI:29985"/>
        <dbReference type="ChEBI" id="CHEBI:57925"/>
        <dbReference type="ChEBI" id="CHEBI:61694"/>
        <dbReference type="EC" id="3.4.19.13"/>
    </reaction>
    <physiologicalReaction direction="left-to-right" evidence="31">
        <dbReference type="Rhea" id="RHEA:28808"/>
    </physiologicalReaction>
</comment>
<comment type="catalytic activity">
    <reaction evidence="4 10 16">
        <text>an S-substituted glutathione + H2O = an S-substituted L-cysteinylglycine + L-glutamate</text>
        <dbReference type="Rhea" id="RHEA:59468"/>
        <dbReference type="ChEBI" id="CHEBI:15377"/>
        <dbReference type="ChEBI" id="CHEBI:29985"/>
        <dbReference type="ChEBI" id="CHEBI:90779"/>
        <dbReference type="ChEBI" id="CHEBI:143103"/>
        <dbReference type="EC" id="3.4.19.13"/>
    </reaction>
    <physiologicalReaction direction="left-to-right" evidence="31 33">
        <dbReference type="Rhea" id="RHEA:59469"/>
    </physiologicalReaction>
</comment>
<comment type="catalytic activity">
    <reaction evidence="10">
        <text>leukotriene C4 + H2O = leukotriene D4 + L-glutamate</text>
        <dbReference type="Rhea" id="RHEA:31563"/>
        <dbReference type="ChEBI" id="CHEBI:15377"/>
        <dbReference type="ChEBI" id="CHEBI:29985"/>
        <dbReference type="ChEBI" id="CHEBI:57973"/>
        <dbReference type="ChEBI" id="CHEBI:63166"/>
        <dbReference type="EC" id="3.4.19.14"/>
    </reaction>
    <physiologicalReaction direction="left-to-right" evidence="31">
        <dbReference type="Rhea" id="RHEA:31564"/>
    </physiologicalReaction>
</comment>
<comment type="catalytic activity">
    <reaction evidence="16">
        <text>(13R)-S-glutathionyl-(14S)-hydroxy-(4Z,7Z,9E,11E,16Z,19Z)-docosahexaenoate + H2O = (13R)-S-cysteinylglycyl-(14S)-hydroxy-(4Z,7Z,9E,11E,16Z,19Z)-docosahexaenoate + L-glutamate</text>
        <dbReference type="Rhea" id="RHEA:53512"/>
        <dbReference type="ChEBI" id="CHEBI:15377"/>
        <dbReference type="ChEBI" id="CHEBI:29985"/>
        <dbReference type="ChEBI" id="CHEBI:137407"/>
        <dbReference type="ChEBI" id="CHEBI:137408"/>
    </reaction>
    <physiologicalReaction direction="left-to-right" evidence="33">
        <dbReference type="Rhea" id="RHEA:53513"/>
    </physiologicalReaction>
</comment>
<comment type="activity regulation">
    <text evidence="10 11">Activated by autocatalytic cleavage (PubMed:23682772). Inhibited by serine-borate (PubMed:21447318).</text>
</comment>
<comment type="biophysicochemical properties">
    <kinetics>
        <KM evidence="23">11 mM for glycylglycine</KM>
        <KM evidence="10">10.6 uM for glutathione</KM>
        <KM evidence="10">8.8 uM for oxidized-glutathione</KM>
        <KM evidence="23">1.3 mM for D-gamma-glutamyl-p-nitroanalide</KM>
        <KM evidence="10">9.9 uM for S-methylglutathion</KM>
        <KM evidence="10">33.4 uM for gamma-glutamyl leucine</KM>
        <KM evidence="10">10.8 uM for leukotriene C4</KM>
        <KM evidence="16">4.6 uM for (13R)-S-glutathionyl-(14S)-hydroxy-(4Z,7Z,9E,11E,16Z,19Z)-docosahexaenoate</KM>
    </kinetics>
</comment>
<comment type="pathway">
    <text evidence="10">Lipid metabolism; leukotriene D4 biosynthesis.</text>
</comment>
<comment type="pathway">
    <text evidence="10">Sulfur metabolism; glutathione metabolism.</text>
</comment>
<comment type="subunit">
    <text evidence="12 24">Heterodimer composed of the light and heavy chains. The active site is located in the light chain.</text>
</comment>
<comment type="interaction">
    <interactant intactId="EBI-2868937">
        <id>P19440</id>
    </interactant>
    <interactant intactId="EBI-54767918">
        <id>P36268</id>
        <label>GGT2P</label>
    </interactant>
    <organismsDiffer>false</organismsDiffer>
    <experiments>2</experiments>
</comment>
<comment type="interaction">
    <interactant intactId="EBI-21558069">
        <id>P19440-3</id>
    </interactant>
    <interactant intactId="EBI-399080">
        <id>Q92993</id>
        <label>KAT5</label>
    </interactant>
    <organismsDiffer>false</organismsDiffer>
    <experiments>3</experiments>
</comment>
<comment type="interaction">
    <interactant intactId="EBI-21558069">
        <id>P19440-3</id>
    </interactant>
    <interactant intactId="EBI-11742507">
        <id>Q8TAP4-4</id>
        <label>LMO3</label>
    </interactant>
    <organismsDiffer>false</organismsDiffer>
    <experiments>3</experiments>
</comment>
<comment type="interaction">
    <interactant intactId="EBI-21558069">
        <id>P19440-3</id>
    </interactant>
    <interactant intactId="EBI-1383528">
        <id>P17252</id>
        <label>PRKCA</label>
    </interactant>
    <organismsDiffer>false</organismsDiffer>
    <experiments>3</experiments>
</comment>
<comment type="interaction">
    <interactant intactId="EBI-21558069">
        <id>P19440-3</id>
    </interactant>
    <interactant intactId="EBI-9090795">
        <id>Q15047-2</id>
        <label>SETDB1</label>
    </interactant>
    <organismsDiffer>false</organismsDiffer>
    <experiments>3</experiments>
</comment>
<comment type="interaction">
    <interactant intactId="EBI-21558069">
        <id>P19440-3</id>
    </interactant>
    <interactant intactId="EBI-359832">
        <id>P61981</id>
        <label>YWHAG</label>
    </interactant>
    <organismsDiffer>false</organismsDiffer>
    <experiments>3</experiments>
</comment>
<comment type="subcellular location">
    <subcellularLocation>
        <location evidence="11 24">Cell membrane</location>
        <topology evidence="1">Single-pass type II membrane protein</topology>
    </subcellularLocation>
</comment>
<comment type="alternative products">
    <event type="alternative promoter"/>
    <event type="alternative splicing"/>
    <isoform>
        <id>P19440-1</id>
        <name>1</name>
        <sequence type="displayed"/>
    </isoform>
    <isoform>
        <id>P19440-2</id>
        <name>2</name>
        <sequence type="described" ref="VSP_001746 VSP_001747"/>
    </isoform>
    <isoform>
        <id>P19440-3</id>
        <name>3</name>
        <sequence type="described" ref="VSP_008132"/>
    </isoform>
</comment>
<comment type="tissue specificity">
    <text>Detected in fetal and adult kidney and liver, adult pancreas, stomach, intestine, placenta and lung. There are several other tissue-specific forms that arise from alternative promoter usage but that produce the same protein.</text>
</comment>
<comment type="tissue specificity">
    <molecule>Isoform 3</molecule>
    <text evidence="22">Lung-specific.</text>
</comment>
<comment type="PTM">
    <text evidence="3 4 5 6 7 9 11 12 17">N-glycosylated on both chains. Contains hexoses, hexosamines and sialic acid residues. Glycosylation profiles tested in kidney and liver tissues reveal the presence of tissue-specific and site-specific glycan composition, despite the overlap in composition among the N-glycans. A total of 36 glycan compositions, with 40 unique structures are observed. Up to 15 different glycans are observed at a single site, with site-specific variation in glycan composition. The difference in glycosylation profiles in the 2 tissues do not affect the enzyme activity.</text>
</comment>
<comment type="PTM">
    <text evidence="11">Cleaved by autocatalysis into a large and a small subunit and the autocatalytic cleavage is essential to the functional activation of the enzyme.</text>
</comment>
<comment type="disease" evidence="20">
    <disease id="DI-01675">
        <name>Glutathionuria</name>
        <acronym>GLUTH</acronym>
        <description>A very rare, autosomal recessive metabolic disorder characterized by the presence of glutathione in the urine, due to generalized gamma-glutamyl transpeptidase deficiency. Most patients manifest mild to moderate intellectual disability, and behavioral disturbance. Seizures, tremor, marfanoid features and strabismus are observed in some patients.</description>
        <dbReference type="MIM" id="231950"/>
    </disease>
    <text evidence="20">The disease is caused by variants affecting the gene represented in this entry. A large homozygous deletion that removes several exons of all isoforms of GGT1 has been found in one family affected by glutathionuria.</text>
</comment>
<comment type="miscellaneous">
    <text evidence="23">Cys-454 was thought to bind the gamma-glutamyl moiety, but mutagenesis of this residue had no effect on activity.</text>
</comment>
<comment type="miscellaneous">
    <text evidence="32">Chloride ions bound in the active site cavity may contribute to stabilize the protein fold.</text>
</comment>
<comment type="miscellaneous">
    <molecule>Isoform 1</molecule>
    <text>Produced by alternative promoter usage.</text>
</comment>
<comment type="miscellaneous">
    <molecule>Isoform 2</molecule>
    <text evidence="30">Produced by alternative splicing of isoform 1.</text>
</comment>
<comment type="miscellaneous">
    <molecule>Isoform 3</molecule>
    <text evidence="26">Produced by alternative promoter usage.</text>
</comment>
<comment type="similarity">
    <text evidence="30">Belongs to the gamma-glutamyltransferase family.</text>
</comment>
<comment type="sequence caution" evidence="30">
    <conflict type="erroneous initiation">
        <sequence resource="EMBL-CDS" id="AAA35899"/>
    </conflict>
    <text>Extended N-terminus.</text>
</comment>
<comment type="online information" name="Wikipedia">
    <link uri="https://en.wikipedia.org/wiki/Gamma_glutamyl_transpeptidase"/>
    <text>Gamma-glutamyl transpeptidase entry</text>
</comment>
<organism>
    <name type="scientific">Homo sapiens</name>
    <name type="common">Human</name>
    <dbReference type="NCBI Taxonomy" id="9606"/>
    <lineage>
        <taxon>Eukaryota</taxon>
        <taxon>Metazoa</taxon>
        <taxon>Chordata</taxon>
        <taxon>Craniata</taxon>
        <taxon>Vertebrata</taxon>
        <taxon>Euteleostomi</taxon>
        <taxon>Mammalia</taxon>
        <taxon>Eutheria</taxon>
        <taxon>Euarchontoglires</taxon>
        <taxon>Primates</taxon>
        <taxon>Haplorrhini</taxon>
        <taxon>Catarrhini</taxon>
        <taxon>Hominidae</taxon>
        <taxon>Homo</taxon>
    </lineage>
</organism>
<accession>P19440</accession>
<accession>Q08247</accession>
<accession>Q14404</accession>
<accession>Q8TBS1</accession>
<accession>Q9UMK1</accession>
<evidence type="ECO:0000250" key="1">
    <source>
        <dbReference type="UniProtKB" id="P07314"/>
    </source>
</evidence>
<evidence type="ECO:0000269" key="2">
    <source>
    </source>
</evidence>
<evidence type="ECO:0000269" key="3">
    <source>
    </source>
</evidence>
<evidence type="ECO:0000269" key="4">
    <source>
    </source>
</evidence>
<evidence type="ECO:0000269" key="5">
    <source>
    </source>
</evidence>
<evidence type="ECO:0000269" key="6">
    <source>
    </source>
</evidence>
<evidence type="ECO:0000269" key="7">
    <source>
    </source>
</evidence>
<evidence type="ECO:0000269" key="8">
    <source>
    </source>
</evidence>
<evidence type="ECO:0000269" key="9">
    <source>
    </source>
</evidence>
<evidence type="ECO:0000269" key="10">
    <source>
    </source>
</evidence>
<evidence type="ECO:0000269" key="11">
    <source>
    </source>
</evidence>
<evidence type="ECO:0000269" key="12">
    <source>
    </source>
</evidence>
<evidence type="ECO:0000269" key="13">
    <source>
    </source>
</evidence>
<evidence type="ECO:0000269" key="14">
    <source>
    </source>
</evidence>
<evidence type="ECO:0000269" key="15">
    <source>
    </source>
</evidence>
<evidence type="ECO:0000269" key="16">
    <source>
    </source>
</evidence>
<evidence type="ECO:0000269" key="17">
    <source>
    </source>
</evidence>
<evidence type="ECO:0000269" key="18">
    <source>
    </source>
</evidence>
<evidence type="ECO:0000269" key="19">
    <source>
    </source>
</evidence>
<evidence type="ECO:0000269" key="20">
    <source>
    </source>
</evidence>
<evidence type="ECO:0000269" key="21">
    <source>
    </source>
</evidence>
<evidence type="ECO:0000269" key="22">
    <source>
    </source>
</evidence>
<evidence type="ECO:0000269" key="23">
    <source>
    </source>
</evidence>
<evidence type="ECO:0000269" key="24">
    <source>
    </source>
</evidence>
<evidence type="ECO:0000269" key="25">
    <source>
    </source>
</evidence>
<evidence type="ECO:0000269" key="26">
    <source>
    </source>
</evidence>
<evidence type="ECO:0000303" key="27">
    <source>
    </source>
</evidence>
<evidence type="ECO:0000303" key="28">
    <source>
    </source>
</evidence>
<evidence type="ECO:0000303" key="29">
    <source>
    </source>
</evidence>
<evidence type="ECO:0000305" key="30"/>
<evidence type="ECO:0000305" key="31">
    <source>
    </source>
</evidence>
<evidence type="ECO:0000305" key="32">
    <source>
    </source>
</evidence>
<evidence type="ECO:0000305" key="33">
    <source>
    </source>
</evidence>
<evidence type="ECO:0000305" key="34">
    <source>
    </source>
</evidence>
<evidence type="ECO:0007744" key="35">
    <source>
        <dbReference type="PDB" id="4Z9O"/>
    </source>
</evidence>
<evidence type="ECO:0007744" key="36">
    <source>
        <dbReference type="PDB" id="4ZBK"/>
    </source>
</evidence>
<evidence type="ECO:0007744" key="37">
    <source>
        <dbReference type="PDB" id="4ZC6"/>
    </source>
</evidence>
<evidence type="ECO:0007744" key="38">
    <source>
        <dbReference type="PDB" id="4ZCG"/>
    </source>
</evidence>
<evidence type="ECO:0007829" key="39">
    <source>
        <dbReference type="PDB" id="4GDX"/>
    </source>
</evidence>
<evidence type="ECO:0007829" key="40">
    <source>
        <dbReference type="PDB" id="4Z9O"/>
    </source>
</evidence>
<evidence type="ECO:0007829" key="41">
    <source>
        <dbReference type="PDB" id="4ZC6"/>
    </source>
</evidence>
<evidence type="ECO:0007829" key="42">
    <source>
        <dbReference type="PDB" id="5V4Q"/>
    </source>
</evidence>
<dbReference type="EC" id="3.4.19.13" evidence="4 10 16"/>
<dbReference type="EC" id="2.3.2.2" evidence="4 10 11 21 23 24 25"/>
<dbReference type="EC" id="3.4.19.14" evidence="10"/>
<dbReference type="EMBL" id="J04131">
    <property type="protein sequence ID" value="AAA52547.1"/>
    <property type="molecule type" value="mRNA"/>
</dbReference>
<dbReference type="EMBL" id="M24087">
    <property type="protein sequence ID" value="AAA35899.1"/>
    <property type="status" value="ALT_INIT"/>
    <property type="molecule type" value="mRNA"/>
</dbReference>
<dbReference type="EMBL" id="M24903">
    <property type="protein sequence ID" value="AAA52546.1"/>
    <property type="molecule type" value="mRNA"/>
</dbReference>
<dbReference type="EMBL" id="J05235">
    <property type="protein sequence ID" value="AAA35889.1"/>
    <property type="molecule type" value="mRNA"/>
</dbReference>
<dbReference type="EMBL" id="X60069">
    <property type="protein sequence ID" value="CAA42674.1"/>
    <property type="molecule type" value="mRNA"/>
</dbReference>
<dbReference type="EMBL" id="L20490">
    <property type="protein sequence ID" value="AAA02884.1"/>
    <property type="molecule type" value="mRNA"/>
</dbReference>
<dbReference type="EMBL" id="L20493">
    <property type="protein sequence ID" value="AAA02886.1"/>
    <property type="molecule type" value="mRNA"/>
</dbReference>
<dbReference type="EMBL" id="CR456494">
    <property type="protein sequence ID" value="CAG30380.1"/>
    <property type="molecule type" value="mRNA"/>
</dbReference>
<dbReference type="EMBL" id="AP000356">
    <property type="status" value="NOT_ANNOTATED_CDS"/>
    <property type="molecule type" value="Genomic_DNA"/>
</dbReference>
<dbReference type="EMBL" id="BC025927">
    <property type="protein sequence ID" value="AAH25927.1"/>
    <property type="molecule type" value="mRNA"/>
</dbReference>
<dbReference type="EMBL" id="BC069473">
    <property type="protein sequence ID" value="AAH69473.1"/>
    <property type="molecule type" value="mRNA"/>
</dbReference>
<dbReference type="EMBL" id="BC069504">
    <property type="protein sequence ID" value="AAH69504.1"/>
    <property type="molecule type" value="mRNA"/>
</dbReference>
<dbReference type="EMBL" id="BC128238">
    <property type="protein sequence ID" value="AAI28239.1"/>
    <property type="molecule type" value="mRNA"/>
</dbReference>
<dbReference type="EMBL" id="BC128239">
    <property type="protein sequence ID" value="AAI28240.1"/>
    <property type="molecule type" value="mRNA"/>
</dbReference>
<dbReference type="CCDS" id="CCDS42992.1">
    <molecule id="P19440-1"/>
</dbReference>
<dbReference type="PIR" id="A31253">
    <property type="entry name" value="EKHUEX"/>
</dbReference>
<dbReference type="PIR" id="A48987">
    <property type="entry name" value="A48987"/>
</dbReference>
<dbReference type="PIR" id="A60439">
    <property type="entry name" value="A60439"/>
</dbReference>
<dbReference type="PIR" id="JS0067">
    <property type="entry name" value="JS0067"/>
</dbReference>
<dbReference type="PIR" id="PS0312">
    <property type="entry name" value="PS0312"/>
</dbReference>
<dbReference type="RefSeq" id="NP_001275762.1">
    <molecule id="P19440-1"/>
    <property type="nucleotide sequence ID" value="NM_001288833.2"/>
</dbReference>
<dbReference type="RefSeq" id="NP_038265.2">
    <molecule id="P19440-1"/>
    <property type="nucleotide sequence ID" value="NM_013421.3"/>
</dbReference>
<dbReference type="RefSeq" id="NP_038347.2">
    <molecule id="P19440-1"/>
    <property type="nucleotide sequence ID" value="NM_013430.3"/>
</dbReference>
<dbReference type="PDB" id="4GDX">
    <property type="method" value="X-ray"/>
    <property type="resolution" value="1.67 A"/>
    <property type="chains" value="A=2-374, B=375-569"/>
</dbReference>
<dbReference type="PDB" id="4GG2">
    <property type="method" value="X-ray"/>
    <property type="resolution" value="2.21 A"/>
    <property type="chains" value="A=28-380, B=381-569"/>
</dbReference>
<dbReference type="PDB" id="4Z9O">
    <property type="method" value="X-ray"/>
    <property type="resolution" value="2.30 A"/>
    <property type="chains" value="A=28-380, B=381-569"/>
</dbReference>
<dbReference type="PDB" id="4ZBK">
    <property type="method" value="X-ray"/>
    <property type="resolution" value="2.18 A"/>
    <property type="chains" value="A=28-380, B=381-569"/>
</dbReference>
<dbReference type="PDB" id="4ZC6">
    <property type="method" value="X-ray"/>
    <property type="resolution" value="2.10 A"/>
    <property type="chains" value="A=28-380, B=381-569"/>
</dbReference>
<dbReference type="PDB" id="4ZCG">
    <property type="method" value="X-ray"/>
    <property type="resolution" value="2.22 A"/>
    <property type="chains" value="A=28-380, B=381-569"/>
</dbReference>
<dbReference type="PDB" id="5V4Q">
    <property type="method" value="X-ray"/>
    <property type="resolution" value="2.20 A"/>
    <property type="chains" value="A=28-380, B=381-569"/>
</dbReference>
<dbReference type="PDBsum" id="4GDX"/>
<dbReference type="PDBsum" id="4GG2"/>
<dbReference type="PDBsum" id="4Z9O"/>
<dbReference type="PDBsum" id="4ZBK"/>
<dbReference type="PDBsum" id="4ZC6"/>
<dbReference type="PDBsum" id="4ZCG"/>
<dbReference type="PDBsum" id="5V4Q"/>
<dbReference type="SMR" id="P19440"/>
<dbReference type="BioGRID" id="108946">
    <property type="interactions" value="29"/>
</dbReference>
<dbReference type="FunCoup" id="P19440">
    <property type="interactions" value="228"/>
</dbReference>
<dbReference type="IntAct" id="P19440">
    <property type="interactions" value="18"/>
</dbReference>
<dbReference type="MINT" id="P19440"/>
<dbReference type="STRING" id="9606.ENSP00000248923"/>
<dbReference type="BindingDB" id="P19440"/>
<dbReference type="ChEMBL" id="CHEMBL5696"/>
<dbReference type="DrugBank" id="DB00143">
    <property type="generic name" value="Glutathione"/>
</dbReference>
<dbReference type="DrugCentral" id="P19440"/>
<dbReference type="SwissLipids" id="SLP:000001454"/>
<dbReference type="MEROPS" id="T03.006"/>
<dbReference type="GlyConnect" id="1261">
    <property type="glycosylation" value="27 N-Linked glycans (4 sites)"/>
</dbReference>
<dbReference type="GlyCosmos" id="P19440">
    <property type="glycosylation" value="7 sites, 29 glycans"/>
</dbReference>
<dbReference type="GlyGen" id="P19440">
    <property type="glycosylation" value="7 sites, 133 N-linked glycans (4 sites)"/>
</dbReference>
<dbReference type="iPTMnet" id="P19440"/>
<dbReference type="PhosphoSitePlus" id="P19440"/>
<dbReference type="BioMuta" id="GGT1"/>
<dbReference type="DMDM" id="93140064"/>
<dbReference type="CPTAC" id="CPTAC-2217"/>
<dbReference type="jPOST" id="P19440"/>
<dbReference type="MassIVE" id="P19440"/>
<dbReference type="PaxDb" id="9606-ENSP00000383232"/>
<dbReference type="PeptideAtlas" id="P19440"/>
<dbReference type="ProteomicsDB" id="53662">
    <molecule id="P19440-1"/>
</dbReference>
<dbReference type="ProteomicsDB" id="53663">
    <molecule id="P19440-2"/>
</dbReference>
<dbReference type="ProteomicsDB" id="53664">
    <molecule id="P19440-3"/>
</dbReference>
<dbReference type="Pumba" id="P19440"/>
<dbReference type="Antibodypedia" id="24014">
    <property type="antibodies" value="463 antibodies from 37 providers"/>
</dbReference>
<dbReference type="DNASU" id="2678"/>
<dbReference type="Ensembl" id="ENST00000400380.5">
    <molecule id="P19440-1"/>
    <property type="protein sequence ID" value="ENSP00000383231.1"/>
    <property type="gene ID" value="ENSG00000100031.19"/>
</dbReference>
<dbReference type="Ensembl" id="ENST00000400382.6">
    <molecule id="P19440-1"/>
    <property type="protein sequence ID" value="ENSP00000383232.1"/>
    <property type="gene ID" value="ENSG00000100031.19"/>
</dbReference>
<dbReference type="Ensembl" id="ENST00000401885.5">
    <molecule id="P19440-3"/>
    <property type="protein sequence ID" value="ENSP00000384381.1"/>
    <property type="gene ID" value="ENSG00000100031.19"/>
</dbReference>
<dbReference type="Ensembl" id="ENST00000403838.5">
    <molecule id="P19440-3"/>
    <property type="protein sequence ID" value="ENSP00000384820.1"/>
    <property type="gene ID" value="ENSG00000100031.19"/>
</dbReference>
<dbReference type="Ensembl" id="ENST00000404532.5">
    <molecule id="P19440-3"/>
    <property type="protein sequence ID" value="ENSP00000385445.1"/>
    <property type="gene ID" value="ENSG00000100031.19"/>
</dbReference>
<dbReference type="Ensembl" id="ENST00000425895.5">
    <molecule id="P19440-2"/>
    <property type="protein sequence ID" value="ENSP00000387499.1"/>
    <property type="gene ID" value="ENSG00000100031.19"/>
</dbReference>
<dbReference type="GeneID" id="2678"/>
<dbReference type="KEGG" id="hsa:2678"/>
<dbReference type="MANE-Select" id="ENST00000400382.6">
    <property type="protein sequence ID" value="ENSP00000383232.1"/>
    <property type="RefSeq nucleotide sequence ID" value="NM_001288833.2"/>
    <property type="RefSeq protein sequence ID" value="NP_001275762.1"/>
</dbReference>
<dbReference type="UCSC" id="uc003aan.2">
    <molecule id="P19440-1"/>
    <property type="organism name" value="human"/>
</dbReference>
<dbReference type="AGR" id="HGNC:4250"/>
<dbReference type="CTD" id="2678"/>
<dbReference type="DisGeNET" id="2678"/>
<dbReference type="GeneCards" id="GGT1"/>
<dbReference type="GeneReviews" id="GGT1"/>
<dbReference type="HGNC" id="HGNC:4250">
    <property type="gene designation" value="GGT1"/>
</dbReference>
<dbReference type="HPA" id="ENSG00000100031">
    <property type="expression patterns" value="Tissue enhanced (kidney, liver)"/>
</dbReference>
<dbReference type="MalaCards" id="GGT1"/>
<dbReference type="MIM" id="231950">
    <property type="type" value="phenotype"/>
</dbReference>
<dbReference type="MIM" id="612346">
    <property type="type" value="gene"/>
</dbReference>
<dbReference type="neXtProt" id="NX_P19440"/>
<dbReference type="OpenTargets" id="ENSG00000100031"/>
<dbReference type="Orphanet" id="33573">
    <property type="disease" value="Gamma-glutamyl transpeptidase deficiency"/>
</dbReference>
<dbReference type="PharmGKB" id="PA28662"/>
<dbReference type="VEuPathDB" id="HostDB:ENSG00000100031"/>
<dbReference type="eggNOG" id="KOG2410">
    <property type="taxonomic scope" value="Eukaryota"/>
</dbReference>
<dbReference type="GeneTree" id="ENSGT00940000154601"/>
<dbReference type="HOGENOM" id="CLU_014813_1_3_1"/>
<dbReference type="InParanoid" id="P19440"/>
<dbReference type="OMA" id="GFMLVHL"/>
<dbReference type="OrthoDB" id="1081007at2759"/>
<dbReference type="PAN-GO" id="P19440">
    <property type="GO annotations" value="6 GO annotations based on evolutionary models"/>
</dbReference>
<dbReference type="PhylomeDB" id="P19440"/>
<dbReference type="TreeFam" id="TF313608"/>
<dbReference type="BioCyc" id="MetaCyc:MONOMER66-34394"/>
<dbReference type="PathwayCommons" id="P19440"/>
<dbReference type="Reactome" id="R-HSA-174403">
    <property type="pathway name" value="Glutathione synthesis and recycling"/>
</dbReference>
<dbReference type="Reactome" id="R-HSA-2142691">
    <property type="pathway name" value="Synthesis of Leukotrienes (LT) and Eoxins (EX)"/>
</dbReference>
<dbReference type="Reactome" id="R-HSA-5423646">
    <property type="pathway name" value="Aflatoxin activation and detoxification"/>
</dbReference>
<dbReference type="Reactome" id="R-HSA-5579022">
    <property type="pathway name" value="Defective GGT1 causes GLUTH"/>
</dbReference>
<dbReference type="Reactome" id="R-HSA-9035968">
    <property type="pathway name" value="Defective GGT1 in aflatoxin detoxification causes GLUTH"/>
</dbReference>
<dbReference type="Reactome" id="R-HSA-9664535">
    <property type="pathway name" value="LTC4-CYSLTR mediated IL4 production"/>
</dbReference>
<dbReference type="Reactome" id="R-HSA-9753281">
    <property type="pathway name" value="Paracetamol ADME"/>
</dbReference>
<dbReference type="SABIO-RK" id="P19440"/>
<dbReference type="SignaLink" id="P19440"/>
<dbReference type="UniPathway" id="UPA00204"/>
<dbReference type="UniPathway" id="UPA00880"/>
<dbReference type="BioGRID-ORCS" id="2678">
    <property type="hits" value="104 hits in 1073 CRISPR screens"/>
</dbReference>
<dbReference type="ChiTaRS" id="GGT1">
    <property type="organism name" value="human"/>
</dbReference>
<dbReference type="EvolutionaryTrace" id="P19440"/>
<dbReference type="GeneWiki" id="GGT1"/>
<dbReference type="GenomeRNAi" id="2678"/>
<dbReference type="Pharos" id="P19440">
    <property type="development level" value="Tbio"/>
</dbReference>
<dbReference type="PRO" id="PR:P19440"/>
<dbReference type="Proteomes" id="UP000005640">
    <property type="component" value="Chromosome 22"/>
</dbReference>
<dbReference type="RNAct" id="P19440">
    <property type="molecule type" value="protein"/>
</dbReference>
<dbReference type="Bgee" id="ENSG00000100031">
    <property type="expression patterns" value="Expressed in right lobe of liver and 119 other cell types or tissues"/>
</dbReference>
<dbReference type="ExpressionAtlas" id="P19440">
    <property type="expression patterns" value="baseline and differential"/>
</dbReference>
<dbReference type="GO" id="GO:0070062">
    <property type="term" value="C:extracellular exosome"/>
    <property type="evidence" value="ECO:0007005"/>
    <property type="project" value="UniProtKB"/>
</dbReference>
<dbReference type="GO" id="GO:0005615">
    <property type="term" value="C:extracellular space"/>
    <property type="evidence" value="ECO:0007005"/>
    <property type="project" value="UniProtKB"/>
</dbReference>
<dbReference type="GO" id="GO:0005886">
    <property type="term" value="C:plasma membrane"/>
    <property type="evidence" value="ECO:0000314"/>
    <property type="project" value="UniProtKB"/>
</dbReference>
<dbReference type="GO" id="GO:0036374">
    <property type="term" value="F:glutathione hydrolase activity"/>
    <property type="evidence" value="ECO:0000314"/>
    <property type="project" value="UniProtKB"/>
</dbReference>
<dbReference type="GO" id="GO:0103068">
    <property type="term" value="F:leukotriene C4 gamma-glutamyl transferase activity"/>
    <property type="evidence" value="ECO:0007669"/>
    <property type="project" value="UniProtKB-EC"/>
</dbReference>
<dbReference type="GO" id="GO:0002951">
    <property type="term" value="F:leukotriene-C(4) hydrolase"/>
    <property type="evidence" value="ECO:0000314"/>
    <property type="project" value="BHF-UCL"/>
</dbReference>
<dbReference type="GO" id="GO:0000048">
    <property type="term" value="F:peptidyltransferase activity"/>
    <property type="evidence" value="ECO:0000314"/>
    <property type="project" value="BHF-UCL"/>
</dbReference>
<dbReference type="GO" id="GO:0006520">
    <property type="term" value="P:amino acid metabolic process"/>
    <property type="evidence" value="ECO:0000314"/>
    <property type="project" value="UniProtKB"/>
</dbReference>
<dbReference type="GO" id="GO:0019344">
    <property type="term" value="P:cysteine biosynthetic process"/>
    <property type="evidence" value="ECO:0000250"/>
    <property type="project" value="UniProtKB"/>
</dbReference>
<dbReference type="GO" id="GO:0006631">
    <property type="term" value="P:fatty acid metabolic process"/>
    <property type="evidence" value="ECO:0000314"/>
    <property type="project" value="BHF-UCL"/>
</dbReference>
<dbReference type="GO" id="GO:0006536">
    <property type="term" value="P:glutamate metabolic process"/>
    <property type="evidence" value="ECO:0000314"/>
    <property type="project" value="UniProtKB"/>
</dbReference>
<dbReference type="GO" id="GO:0006750">
    <property type="term" value="P:glutathione biosynthetic process"/>
    <property type="evidence" value="ECO:0000250"/>
    <property type="project" value="UniProtKB"/>
</dbReference>
<dbReference type="GO" id="GO:0006751">
    <property type="term" value="P:glutathione catabolic process"/>
    <property type="evidence" value="ECO:0000314"/>
    <property type="project" value="UniProtKB"/>
</dbReference>
<dbReference type="GO" id="GO:1901750">
    <property type="term" value="P:leukotriene D4 biosynthetic process"/>
    <property type="evidence" value="ECO:0000314"/>
    <property type="project" value="BHF-UCL"/>
</dbReference>
<dbReference type="GO" id="GO:0006691">
    <property type="term" value="P:leukotriene metabolic process"/>
    <property type="evidence" value="ECO:0000314"/>
    <property type="project" value="UniProtKB"/>
</dbReference>
<dbReference type="GO" id="GO:0031179">
    <property type="term" value="P:peptide modification"/>
    <property type="evidence" value="ECO:0000318"/>
    <property type="project" value="GO_Central"/>
</dbReference>
<dbReference type="GO" id="GO:0006508">
    <property type="term" value="P:proteolysis"/>
    <property type="evidence" value="ECO:0000315"/>
    <property type="project" value="UniProtKB"/>
</dbReference>
<dbReference type="GO" id="GO:0002682">
    <property type="term" value="P:regulation of immune system process"/>
    <property type="evidence" value="ECO:0000250"/>
    <property type="project" value="UniProtKB"/>
</dbReference>
<dbReference type="GO" id="GO:0050727">
    <property type="term" value="P:regulation of inflammatory response"/>
    <property type="evidence" value="ECO:0000250"/>
    <property type="project" value="UniProtKB"/>
</dbReference>
<dbReference type="GO" id="GO:0007283">
    <property type="term" value="P:spermatogenesis"/>
    <property type="evidence" value="ECO:0000250"/>
    <property type="project" value="UniProtKB"/>
</dbReference>
<dbReference type="GO" id="GO:0031638">
    <property type="term" value="P:zymogen activation"/>
    <property type="evidence" value="ECO:0000314"/>
    <property type="project" value="UniProtKB"/>
</dbReference>
<dbReference type="FunFam" id="3.60.20.40:FF:000007">
    <property type="entry name" value="Glutathione hydrolase 1 proenzyme"/>
    <property type="match status" value="1"/>
</dbReference>
<dbReference type="FunFam" id="1.10.246.130:FF:000002">
    <property type="entry name" value="glutathione hydrolase 1 proenzyme"/>
    <property type="match status" value="1"/>
</dbReference>
<dbReference type="Gene3D" id="1.10.246.130">
    <property type="match status" value="1"/>
</dbReference>
<dbReference type="Gene3D" id="3.60.20.40">
    <property type="match status" value="1"/>
</dbReference>
<dbReference type="InterPro" id="IPR055262">
    <property type="entry name" value="GGT_CS"/>
</dbReference>
<dbReference type="InterPro" id="IPR043138">
    <property type="entry name" value="GGT_lsub_C"/>
</dbReference>
<dbReference type="InterPro" id="IPR000101">
    <property type="entry name" value="GGT_peptidase"/>
</dbReference>
<dbReference type="InterPro" id="IPR043137">
    <property type="entry name" value="GGT_ssub"/>
</dbReference>
<dbReference type="InterPro" id="IPR029055">
    <property type="entry name" value="Ntn_hydrolases_N"/>
</dbReference>
<dbReference type="NCBIfam" id="TIGR00066">
    <property type="entry name" value="g_glut_trans"/>
    <property type="match status" value="1"/>
</dbReference>
<dbReference type="PANTHER" id="PTHR11686">
    <property type="entry name" value="GAMMA GLUTAMYL TRANSPEPTIDASE"/>
    <property type="match status" value="1"/>
</dbReference>
<dbReference type="PANTHER" id="PTHR11686:SF56">
    <property type="entry name" value="GLUTATHIONE HYDROLASE 1 PROENZYME-RELATED"/>
    <property type="match status" value="1"/>
</dbReference>
<dbReference type="Pfam" id="PF01019">
    <property type="entry name" value="G_glu_transpept"/>
    <property type="match status" value="1"/>
</dbReference>
<dbReference type="PRINTS" id="PR01210">
    <property type="entry name" value="GGTRANSPTASE"/>
</dbReference>
<dbReference type="SUPFAM" id="SSF56235">
    <property type="entry name" value="N-terminal nucleophile aminohydrolases (Ntn hydrolases)"/>
    <property type="match status" value="1"/>
</dbReference>
<dbReference type="PROSITE" id="PS00462">
    <property type="entry name" value="G_GLU_TRANSPEPTIDASE"/>
    <property type="match status" value="1"/>
</dbReference>
<reference key="1">
    <citation type="journal article" date="1988" name="Proc. Natl. Acad. Sci. U.S.A.">
        <title>Cloning and nucleotide sequence of human gamma-glutamyl transpeptidase.</title>
        <authorList>
            <person name="Rajpert-De Meyts E."/>
            <person name="Heisterkamp N."/>
            <person name="Groffen J."/>
        </authorList>
    </citation>
    <scope>NUCLEOTIDE SEQUENCE [MRNA] (ISOFORM 1)</scope>
    <scope>VARIANT ALA-272</scope>
    <source>
        <tissue>Placenta</tissue>
    </source>
</reference>
<reference key="2">
    <citation type="journal article" date="1988" name="Gene">
        <title>The primary structure of human gamma-glutamyl transpeptidase.</title>
        <authorList>
            <person name="Sakamuro D."/>
            <person name="Yamazoe M."/>
            <person name="Matsuda Y."/>
            <person name="Kangawa K."/>
            <person name="Taniguchi N."/>
            <person name="Matsuo H."/>
            <person name="Yoshikawa H."/>
            <person name="Ogasawara N."/>
        </authorList>
    </citation>
    <scope>NUCLEOTIDE SEQUENCE [MRNA] (ISOFORM 1)</scope>
    <scope>PROTEIN SEQUENCE OF 30-58 AND 381-408</scope>
    <scope>VARIANT ALA-272</scope>
    <source>
        <tissue>Kidney</tissue>
        <tissue>Liver</tissue>
    </source>
</reference>
<reference key="3">
    <citation type="journal article" date="1989" name="Toxicol. Appl. Pharmacol.">
        <title>Regulation of the expression of some genes for enzymes of glutathione metabolism in hepatotoxicity and hepatocarcinogenesis.</title>
        <authorList>
            <person name="Pitot H.C."/>
            <person name="Goodspeed D.C."/>
            <person name="Dunn T.J."/>
            <person name="Hendrich S."/>
            <person name="Maronpot R.R."/>
            <person name="Moran S."/>
        </authorList>
    </citation>
    <scope>NUCLEOTIDE SEQUENCE [MRNA] (ISOFORM 1)</scope>
    <scope>VARIANT ALA-272</scope>
</reference>
<reference key="4">
    <citation type="journal article" date="1989" name="Gene">
        <title>Human gamma-glutamyl transpeptidase cDNA: comparison of hepatoma and kidney mRNA in the human and rat.</title>
        <authorList>
            <person name="Goodspeed D.C."/>
            <person name="Dunn T.J."/>
            <person name="Miller C.D."/>
            <person name="Pitot H.C."/>
        </authorList>
    </citation>
    <scope>NUCLEOTIDE SEQUENCE [MRNA] (ISOFORM 1)</scope>
    <scope>VARIANT ALA-272</scope>
    <source>
        <tissue>Hepatoblastoma</tissue>
    </source>
</reference>
<reference key="5">
    <citation type="journal article" date="1990" name="J. Biol. Chem.">
        <title>An alternatively processed mRNA specific for gamma-glutamyl transpeptidase in human tissues.</title>
        <authorList>
            <person name="Pawlak A."/>
            <person name="Cohen E.H."/>
            <person name="Octave J.-N."/>
            <person name="Schweickhardt R."/>
            <person name="Wu S.-J."/>
            <person name="Bulle F."/>
            <person name="Chikhi N."/>
            <person name="Baik J.-H."/>
            <person name="Siegrist S."/>
            <person name="Guellaen G."/>
        </authorList>
    </citation>
    <scope>NUCLEOTIDE SEQUENCE [MRNA] (ISOFORM 2)</scope>
    <scope>VARIANT ALA-272</scope>
    <source>
        <tissue>Liver</tissue>
    </source>
</reference>
<reference key="6">
    <citation type="journal article" date="1992" name="Biochem. Pharmacol.">
        <title>Gamma-glutamyltransferase: nucleotide sequence of the human pancreatic cDNA. Evidence for a ubiquitous gamma-glutamyltransferase polypeptide in human tissues.</title>
        <authorList>
            <person name="Courtay C."/>
            <person name="Oster T."/>
            <person name="Michelet F."/>
            <person name="Visvikis A."/>
            <person name="Diederich M."/>
            <person name="Wellman M."/>
            <person name="Siest G."/>
        </authorList>
    </citation>
    <scope>NUCLEOTIDE SEQUENCE [MRNA] (ISOFORM 1)</scope>
    <scope>VARIANT ALA-272</scope>
    <source>
        <tissue>Pancreas</tissue>
    </source>
</reference>
<reference key="7">
    <citation type="journal article" date="1993" name="Proc. Natl. Acad. Sci. U.S.A.">
        <title>Human lung expresses unique gamma-glutamyl transpeptidase transcripts.</title>
        <authorList>
            <person name="Wetmore L.A."/>
            <person name="Gerard C."/>
            <person name="Drazen J.M."/>
        </authorList>
    </citation>
    <scope>NUCLEOTIDE SEQUENCE [MRNA] (ISOFORM 3)</scope>
    <scope>LACK OF FUNCTION OF ISOFORM 3</scope>
    <scope>TISSUE SPECIFICITY (ISOFORM 3)</scope>
    <source>
        <tissue>Lung</tissue>
    </source>
</reference>
<reference key="8">
    <citation type="journal article" date="2004" name="Genome Biol.">
        <title>A genome annotation-driven approach to cloning the human ORFeome.</title>
        <authorList>
            <person name="Collins J.E."/>
            <person name="Wright C.L."/>
            <person name="Edwards C.A."/>
            <person name="Davis M.P."/>
            <person name="Grinham J.A."/>
            <person name="Cole C.G."/>
            <person name="Goward M.E."/>
            <person name="Aguado B."/>
            <person name="Mallya M."/>
            <person name="Mokrab Y."/>
            <person name="Huckle E.J."/>
            <person name="Beare D.M."/>
            <person name="Dunham I."/>
        </authorList>
    </citation>
    <scope>NUCLEOTIDE SEQUENCE [LARGE SCALE MRNA]</scope>
</reference>
<reference key="9">
    <citation type="journal article" date="1999" name="Nature">
        <title>The DNA sequence of human chromosome 22.</title>
        <authorList>
            <person name="Dunham I."/>
            <person name="Hunt A.R."/>
            <person name="Collins J.E."/>
            <person name="Bruskiewich R."/>
            <person name="Beare D.M."/>
            <person name="Clamp M."/>
            <person name="Smink L.J."/>
            <person name="Ainscough R."/>
            <person name="Almeida J.P."/>
            <person name="Babbage A.K."/>
            <person name="Bagguley C."/>
            <person name="Bailey J."/>
            <person name="Barlow K.F."/>
            <person name="Bates K.N."/>
            <person name="Beasley O.P."/>
            <person name="Bird C.P."/>
            <person name="Blakey S.E."/>
            <person name="Bridgeman A.M."/>
            <person name="Buck D."/>
            <person name="Burgess J."/>
            <person name="Burrill W.D."/>
            <person name="Burton J."/>
            <person name="Carder C."/>
            <person name="Carter N.P."/>
            <person name="Chen Y."/>
            <person name="Clark G."/>
            <person name="Clegg S.M."/>
            <person name="Cobley V.E."/>
            <person name="Cole C.G."/>
            <person name="Collier R.E."/>
            <person name="Connor R."/>
            <person name="Conroy D."/>
            <person name="Corby N.R."/>
            <person name="Coville G.J."/>
            <person name="Cox A.V."/>
            <person name="Davis J."/>
            <person name="Dawson E."/>
            <person name="Dhami P.D."/>
            <person name="Dockree C."/>
            <person name="Dodsworth S.J."/>
            <person name="Durbin R.M."/>
            <person name="Ellington A.G."/>
            <person name="Evans K.L."/>
            <person name="Fey J.M."/>
            <person name="Fleming K."/>
            <person name="French L."/>
            <person name="Garner A.A."/>
            <person name="Gilbert J.G.R."/>
            <person name="Goward M.E."/>
            <person name="Grafham D.V."/>
            <person name="Griffiths M.N.D."/>
            <person name="Hall C."/>
            <person name="Hall R.E."/>
            <person name="Hall-Tamlyn G."/>
            <person name="Heathcott R.W."/>
            <person name="Ho S."/>
            <person name="Holmes S."/>
            <person name="Hunt S.E."/>
            <person name="Jones M.C."/>
            <person name="Kershaw J."/>
            <person name="Kimberley A.M."/>
            <person name="King A."/>
            <person name="Laird G.K."/>
            <person name="Langford C.F."/>
            <person name="Leversha M.A."/>
            <person name="Lloyd C."/>
            <person name="Lloyd D.M."/>
            <person name="Martyn I.D."/>
            <person name="Mashreghi-Mohammadi M."/>
            <person name="Matthews L.H."/>
            <person name="Mccann O.T."/>
            <person name="Mcclay J."/>
            <person name="Mclaren S."/>
            <person name="McMurray A.A."/>
            <person name="Milne S.A."/>
            <person name="Mortimore B.J."/>
            <person name="Odell C.N."/>
            <person name="Pavitt R."/>
            <person name="Pearce A.V."/>
            <person name="Pearson D."/>
            <person name="Phillimore B.J.C.T."/>
            <person name="Phillips S.H."/>
            <person name="Plumb R.W."/>
            <person name="Ramsay H."/>
            <person name="Ramsey Y."/>
            <person name="Rogers L."/>
            <person name="Ross M.T."/>
            <person name="Scott C.E."/>
            <person name="Sehra H.K."/>
            <person name="Skuce C.D."/>
            <person name="Smalley S."/>
            <person name="Smith M.L."/>
            <person name="Soderlund C."/>
            <person name="Spragon L."/>
            <person name="Steward C.A."/>
            <person name="Sulston J.E."/>
            <person name="Swann R.M."/>
            <person name="Vaudin M."/>
            <person name="Wall M."/>
            <person name="Wallis J.M."/>
            <person name="Whiteley M.N."/>
            <person name="Willey D.L."/>
            <person name="Williams L."/>
            <person name="Williams S.A."/>
            <person name="Williamson H."/>
            <person name="Wilmer T.E."/>
            <person name="Wilming L."/>
            <person name="Wright C.L."/>
            <person name="Hubbard T."/>
            <person name="Bentley D.R."/>
            <person name="Beck S."/>
            <person name="Rogers J."/>
            <person name="Shimizu N."/>
            <person name="Minoshima S."/>
            <person name="Kawasaki K."/>
            <person name="Sasaki T."/>
            <person name="Asakawa S."/>
            <person name="Kudoh J."/>
            <person name="Shintani A."/>
            <person name="Shibuya K."/>
            <person name="Yoshizaki Y."/>
            <person name="Aoki N."/>
            <person name="Mitsuyama S."/>
            <person name="Roe B.A."/>
            <person name="Chen F."/>
            <person name="Chu L."/>
            <person name="Crabtree J."/>
            <person name="Deschamps S."/>
            <person name="Do A."/>
            <person name="Do T."/>
            <person name="Dorman A."/>
            <person name="Fang F."/>
            <person name="Fu Y."/>
            <person name="Hu P."/>
            <person name="Hua A."/>
            <person name="Kenton S."/>
            <person name="Lai H."/>
            <person name="Lao H.I."/>
            <person name="Lewis J."/>
            <person name="Lewis S."/>
            <person name="Lin S.-P."/>
            <person name="Loh P."/>
            <person name="Malaj E."/>
            <person name="Nguyen T."/>
            <person name="Pan H."/>
            <person name="Phan S."/>
            <person name="Qi S."/>
            <person name="Qian Y."/>
            <person name="Ray L."/>
            <person name="Ren Q."/>
            <person name="Shaull S."/>
            <person name="Sloan D."/>
            <person name="Song L."/>
            <person name="Wang Q."/>
            <person name="Wang Y."/>
            <person name="Wang Z."/>
            <person name="White J."/>
            <person name="Willingham D."/>
            <person name="Wu H."/>
            <person name="Yao Z."/>
            <person name="Zhan M."/>
            <person name="Zhang G."/>
            <person name="Chissoe S."/>
            <person name="Murray J."/>
            <person name="Miller N."/>
            <person name="Minx P."/>
            <person name="Fulton R."/>
            <person name="Johnson D."/>
            <person name="Bemis G."/>
            <person name="Bentley D."/>
            <person name="Bradshaw H."/>
            <person name="Bourne S."/>
            <person name="Cordes M."/>
            <person name="Du Z."/>
            <person name="Fulton L."/>
            <person name="Goela D."/>
            <person name="Graves T."/>
            <person name="Hawkins J."/>
            <person name="Hinds K."/>
            <person name="Kemp K."/>
            <person name="Latreille P."/>
            <person name="Layman D."/>
            <person name="Ozersky P."/>
            <person name="Rohlfing T."/>
            <person name="Scheet P."/>
            <person name="Walker C."/>
            <person name="Wamsley A."/>
            <person name="Wohldmann P."/>
            <person name="Pepin K."/>
            <person name="Nelson J."/>
            <person name="Korf I."/>
            <person name="Bedell J.A."/>
            <person name="Hillier L.W."/>
            <person name="Mardis E."/>
            <person name="Waterston R."/>
            <person name="Wilson R."/>
            <person name="Emanuel B.S."/>
            <person name="Shaikh T."/>
            <person name="Kurahashi H."/>
            <person name="Saitta S."/>
            <person name="Budarf M.L."/>
            <person name="McDermid H.E."/>
            <person name="Johnson A."/>
            <person name="Wong A.C.C."/>
            <person name="Morrow B.E."/>
            <person name="Edelmann L."/>
            <person name="Kim U.J."/>
            <person name="Shizuya H."/>
            <person name="Simon M.I."/>
            <person name="Dumanski J.P."/>
            <person name="Peyrard M."/>
            <person name="Kedra D."/>
            <person name="Seroussi E."/>
            <person name="Fransson I."/>
            <person name="Tapia I."/>
            <person name="Bruder C.E."/>
            <person name="O'Brien K.P."/>
            <person name="Wilkinson P."/>
            <person name="Bodenteich A."/>
            <person name="Hartman K."/>
            <person name="Hu X."/>
            <person name="Khan A.S."/>
            <person name="Lane L."/>
            <person name="Tilahun Y."/>
            <person name="Wright H."/>
        </authorList>
    </citation>
    <scope>NUCLEOTIDE SEQUENCE [LARGE SCALE GENOMIC DNA]</scope>
</reference>
<reference key="10">
    <citation type="journal article" date="2004" name="Genome Res.">
        <title>The status, quality, and expansion of the NIH full-length cDNA project: the Mammalian Gene Collection (MGC).</title>
        <authorList>
            <consortium name="The MGC Project Team"/>
        </authorList>
    </citation>
    <scope>NUCLEOTIDE SEQUENCE [LARGE SCALE MRNA] (ISOFORMS 1 AND 3)</scope>
    <source>
        <tissue>Lung</tissue>
    </source>
</reference>
<reference key="11">
    <citation type="journal article" date="1988" name="Arch. Biochem. Biophys.">
        <title>Renal gamma-glutamyl transpeptidases: structural and immunological studies.</title>
        <authorList>
            <person name="Tate S.S."/>
            <person name="Khadse V."/>
            <person name="Wellner D."/>
        </authorList>
    </citation>
    <scope>PROTEIN SEQUENCE OF 30-48 AND 381-403</scope>
    <source>
        <tissue>Kidney</tissue>
    </source>
</reference>
<reference key="12">
    <citation type="journal article" date="1998" name="FEBS Lett.">
        <title>An intronic promoter controls the expression of truncated human gamma-glutamyltransferase mRNAs.</title>
        <authorList>
            <person name="Leh H."/>
            <person name="Chikhi N."/>
            <person name="Ichino K."/>
            <person name="Guellaen G."/>
            <person name="Wellman M."/>
            <person name="Siest G."/>
            <person name="Visvikis A."/>
        </authorList>
    </citation>
    <scope>ALTERNATIVE PROMOTER USAGE (ISOFORM 3)</scope>
</reference>
<reference key="13">
    <citation type="journal article" date="1999" name="Comp. Biochem. Physiol.">
        <title>Gamma-glutamyl transpeptidase gene organization and expression: a comparative analysis in rat, mouse, pig and human species.</title>
        <authorList>
            <person name="Chikhi N."/>
            <person name="Holic N."/>
            <person name="Guellaen G."/>
            <person name="Laperche Y."/>
        </authorList>
    </citation>
    <scope>ALTERNATIVE SPLICING</scope>
    <scope>ALTERNATIVE PROMOTER USAGE</scope>
</reference>
<reference key="14">
    <citation type="journal article" date="1977" name="J. Biol. Chem.">
        <title>Human kidney gamma-glutamyl transpeptidase. Catalytic properties, subunit structure, and localization of the gamma-glutamyl binding site on the light subunit.</title>
        <authorList>
            <person name="Tate S.S."/>
            <person name="Ross M.E."/>
        </authorList>
    </citation>
    <scope>GLYCOSYLATION</scope>
    <scope>SIALIC ACID CONTENT</scope>
    <source>
        <tissue>Kidney</tissue>
    </source>
</reference>
<reference key="15">
    <citation type="journal article" date="1988" name="Biochem. Biophys. Res. Commun.">
        <title>In vitro translation and processing of human hepatoma cell (Hep G2) gamma-glutamyl transpeptidase.</title>
        <authorList>
            <person name="Tate S.S."/>
            <person name="Galbraith R.A."/>
        </authorList>
    </citation>
    <scope>GLYCOSYLATION</scope>
</reference>
<reference key="16">
    <citation type="journal article" date="1993" name="J. Biol. Chem.">
        <title>Significance of Arg-107 and Glu-108 in the catalytic mechanism of human gamma-glutamyl transpeptidase. Identification by site-directed mutagenesis.</title>
        <authorList>
            <person name="Ikeda Y."/>
            <person name="Fujii J."/>
            <person name="Taniguchi N."/>
        </authorList>
    </citation>
    <scope>FUNCTION</scope>
    <scope>CATALYTIC ACTIVITY</scope>
    <scope>AUTOCATALYTIC CLEAVAGE</scope>
    <scope>SUBUNIT</scope>
    <scope>SUBCELLULAR LOCATION</scope>
    <scope>MUTAGENESIS OF LYS-100; GLU-102; ARG-107; GLU-108; ARG-112; ARG-139; ARG-147 AND ARG-150</scope>
</reference>
<reference key="17">
    <citation type="journal article" date="1995" name="J. Biol. Chem.">
        <title>Human gamma-glutamyl transpeptidase mutants involving conserved aspartate residues and the unique cysteine residue of the light subunit.</title>
        <authorList>
            <person name="Ikeda Y."/>
            <person name="Fujii J."/>
            <person name="Taniguchi N."/>
            <person name="Meister A."/>
        </authorList>
    </citation>
    <scope>FUNCTION</scope>
    <scope>CATALYTIC ACTIVITY</scope>
    <scope>MUTAGENESIS OF ASP-422; ASP-423 AND CYS-454</scope>
    <scope>BIOPHYSICOCHEMICAL PROPERTIES</scope>
</reference>
<reference key="18">
    <citation type="journal article" date="1995" name="J. Biol. Chem.">
        <title>Involvement of Ser-451 and Ser-452 in the catalysis of human gamma-glutamyl transpeptidase.</title>
        <authorList>
            <person name="Ikeda Y."/>
            <person name="Fujii J."/>
            <person name="Anderson M.E."/>
            <person name="Taniguchi N."/>
            <person name="Meister A."/>
        </authorList>
    </citation>
    <scope>FUNCTION</scope>
    <scope>CATALYTIC ACTIVITY</scope>
    <scope>MUTAGENESIS OF SER-385; SER-413; SER-425; SER-451 AND SER-452</scope>
</reference>
<reference key="19">
    <citation type="journal article" date="1996" name="J. Biochem.">
        <title>Effects of substitutions of the conserved histidine residues in human gamma-glutamyl transpeptidase.</title>
        <authorList>
            <person name="Ikeda Y."/>
            <person name="Fujii J."/>
            <person name="Taniguchi N."/>
        </authorList>
    </citation>
    <scope>FUNCTION</scope>
    <scope>CATALYTIC ACTIVITY</scope>
    <scope>MUTAGENESIS OF HIS-383 AND HIS-505</scope>
</reference>
<reference key="20">
    <citation type="journal article" date="2004" name="Mol. Cell. Proteomics">
        <title>A proteomic analysis of human bile.</title>
        <authorList>
            <person name="Kristiansen T.Z."/>
            <person name="Bunkenborg J."/>
            <person name="Gronborg M."/>
            <person name="Molina H."/>
            <person name="Thuluvath P.J."/>
            <person name="Argani P."/>
            <person name="Goggins M.G."/>
            <person name="Maitra A."/>
            <person name="Pandey A."/>
        </authorList>
    </citation>
    <scope>GLYCOSYLATION [LARGE SCALE ANALYSIS] AT ASN-511</scope>
    <source>
        <tissue>Bile</tissue>
    </source>
</reference>
<reference key="21">
    <citation type="journal article" date="2007" name="Biochemistry">
        <title>Kinetic characterization and identification of the acylation and glycosylation sites of recombinant human gamma-glutamyltranspeptidase.</title>
        <authorList>
            <person name="Castonguay R."/>
            <person name="Halim D."/>
            <person name="Morin M."/>
            <person name="Furtos A."/>
            <person name="Lherbet C."/>
            <person name="Bonneil E."/>
            <person name="Thibault P."/>
            <person name="Keillor J.W."/>
        </authorList>
    </citation>
    <scope>CATALYTIC ACTIVITY</scope>
    <scope>ACTIVE SITE</scope>
    <scope>GLYCOSYLATION AT ASN-120; ASN-266; ASN-344 AND ASN-511</scope>
    <scope>IDENTIFICATION BY MASS SPECTROMETRY</scope>
    <scope>FUNCTION</scope>
</reference>
<reference key="22">
    <citation type="journal article" date="2009" name="J. Proteome Res.">
        <title>Glycoproteomics analysis of human liver tissue by combination of multiple enzyme digestion and hydrazide chemistry.</title>
        <authorList>
            <person name="Chen R."/>
            <person name="Jiang X."/>
            <person name="Sun D."/>
            <person name="Han G."/>
            <person name="Wang F."/>
            <person name="Ye M."/>
            <person name="Wang L."/>
            <person name="Zou H."/>
        </authorList>
    </citation>
    <scope>GLYCOSYLATION [LARGE SCALE ANALYSIS] AT ASN-120; ASN-230 AND ASN-511</scope>
    <source>
        <tissue>Liver</tissue>
    </source>
</reference>
<reference key="23">
    <citation type="journal article" date="2009" name="Nat. Biotechnol.">
        <title>Mass-spectrometric identification and relative quantification of N-linked cell surface glycoproteins.</title>
        <authorList>
            <person name="Wollscheid B."/>
            <person name="Bausch-Fluck D."/>
            <person name="Henderson C."/>
            <person name="O'Brien R."/>
            <person name="Bibel M."/>
            <person name="Schiess R."/>
            <person name="Aebersold R."/>
            <person name="Watts J.D."/>
        </authorList>
    </citation>
    <scope>GLYCOSYLATION [LARGE SCALE ANALYSIS] AT ASN-120</scope>
    <source>
        <tissue>Leukemic T-cell</tissue>
    </source>
</reference>
<reference key="24">
    <citation type="journal article" date="2010" name="J. Biol. Chem.">
        <title>Analysis of site-specific glycosylation of renal and hepatic gamma-glutamyl transpeptidase from normal human tissue.</title>
        <authorList>
            <person name="West M.B."/>
            <person name="Segu Z.M."/>
            <person name="Feasley C.L."/>
            <person name="Kang P."/>
            <person name="Klouckova I."/>
            <person name="Li C."/>
            <person name="Novotny M.V."/>
            <person name="West C.M."/>
            <person name="Mechref Y."/>
            <person name="Hanigan M.H."/>
        </authorList>
    </citation>
    <scope>GLYCOSYLATION AT ASN-95; ASN-120; ASN-230; ASN-266; ASN-297; ASN-344 AND ASN-511</scope>
</reference>
<reference key="25">
    <citation type="journal article" date="2011" name="Anal. Biochem.">
        <title>Gamma-glutamyl compounds: substrate specificity of gamma-glutamyl transpeptidase enzymes.</title>
        <authorList>
            <person name="Wickham S."/>
            <person name="West M.B."/>
            <person name="Cook P.F."/>
            <person name="Hanigan M.H."/>
        </authorList>
    </citation>
    <scope>CATALYTIC ACTIVITY</scope>
    <scope>FUNCTION</scope>
    <scope>BIOPHYSICOCHEMICAL PROPERTIES</scope>
    <scope>SUBSTRATE SPECIFICITY</scope>
    <scope>ACTIVITY REGULATION</scope>
    <scope>PATHWAY</scope>
</reference>
<reference key="26">
    <citation type="journal article" date="2013" name="Antioxid. Redox Signal.">
        <title>Human GGT2 does not autocleave into a functional enzyme: a cautionary tale for interpretation of microarray data on redox signaling.</title>
        <authorList>
            <person name="West M.B."/>
            <person name="Wickham S."/>
            <person name="Parks E.E."/>
            <person name="Sherry D.M."/>
            <person name="Hanigan M.H."/>
        </authorList>
    </citation>
    <scope>FUNCTION</scope>
    <scope>CATALYTIC ACTIVITY</scope>
    <scope>AUTOCATALYTIC CLEAVAGE</scope>
    <scope>ACTIVITY REGULATION</scope>
    <scope>SUBCELLULAR LOCATION</scope>
    <scope>GLYCOSYLATION</scope>
    <scope>MUTAGENESIS OF CYS-192 AND GLU-193</scope>
</reference>
<reference key="27">
    <citation type="journal article" date="2013" name="J. Biol. Chem.">
        <title>Novel insights into eukaryotic gamma-glutamyl transpeptidase 1 from the crystal structure of the glutamate-bound human enzyme.</title>
        <authorList>
            <person name="West M.B."/>
            <person name="Chen Y."/>
            <person name="Wickham S."/>
            <person name="Heroux A."/>
            <person name="Cahill K."/>
            <person name="Hanigan M.H."/>
            <person name="Mooers B.H."/>
        </authorList>
    </citation>
    <scope>X-RAY CRYSTALLOGRAPHY (1.67 ANGSTROMS) IN COMPLEX WITH GLUTAMATE AND CHLORIDE IONS</scope>
    <scope>FUNCTION</scope>
    <scope>CATALYTIC ACTIVITY</scope>
    <scope>AUTOCATALYTIC CLEAVAGE</scope>
    <scope>SUBUNIT</scope>
    <scope>MUTAGENESIS OF GLN-545</scope>
    <scope>DISULFIDE BONDS</scope>
    <scope>GLYCOSYLATION AT ASN-95; ASN-120; ASN-230; ASN-266; ASN-344 AND ASN-511</scope>
</reference>
<reference evidence="35 36 37 38" key="28">
    <citation type="journal article" date="2015" name="J. Biol. Chem.">
        <title>Human gamma-Glutamyl Transpeptidase 1: Structures of the free enzyme, inhibitor-bound tetrahedral transition states, and glutamate-bound enzyme reveal novel movement within the active site during catalysis.</title>
        <authorList>
            <person name="Terzyan S.S."/>
            <person name="Burgett A.W."/>
            <person name="Heroux A."/>
            <person name="Smith C.A."/>
            <person name="Mooers B.H."/>
            <person name="Hanigan M.H."/>
        </authorList>
    </citation>
    <scope>X-RAY CRYSTALLOGRAPHY (2.10 ANGSTROMS) IN COMPLEX WITH SERINE-BORATE AND GLUTAMATE</scope>
    <scope>GLYCOSYLATION AT ASN-95; ASN-120; ASN-230; ASN-266; ASN-344 AND ASN-511</scope>
</reference>
<reference key="29">
    <citation type="journal article" date="2016" name="Proc. Natl. Acad. Sci. U.S.A.">
        <title>Maresin conjugates in tissue regeneration biosynthesis enzymes in human macrophages.</title>
        <authorList>
            <person name="Dalli J."/>
            <person name="Vlasakov I."/>
            <person name="Riley I.R."/>
            <person name="Rodriguez A.R."/>
            <person name="Spur B.W."/>
            <person name="Petasis N.A."/>
            <person name="Chiang N."/>
            <person name="Serhan C.N."/>
        </authorList>
    </citation>
    <scope>FUNCTION</scope>
    <scope>CATALYTIC ACTIVITY</scope>
    <scope>BIOPHYSICOCHEMICAL PROPERTIES</scope>
</reference>
<reference key="30">
    <citation type="journal article" date="2018" name="Eur. J. Hum. Genet.">
        <title>Gamma-glutamyl transpeptidase deficiency caused by a large homozygous intragenic deletion in GGT1.</title>
        <authorList>
            <person name="Darin N."/>
            <person name="Leckstroem K."/>
            <person name="Sikora P."/>
            <person name="Lindgren J."/>
            <person name="Almen G."/>
            <person name="Asin-Cayuela J."/>
        </authorList>
    </citation>
    <scope>INVOLVEMENT IN GLUTH</scope>
</reference>
<protein>
    <recommendedName>
        <fullName>Glutathione hydrolase 1 proenzyme</fullName>
        <ecNumber evidence="4 10 16">3.4.19.13</ecNumber>
    </recommendedName>
    <alternativeName>
        <fullName>Gamma-glutamyltransferase 1</fullName>
    </alternativeName>
    <alternativeName>
        <fullName>Gamma-glutamyltranspeptidase 1</fullName>
        <shortName>GGT 1</shortName>
        <ecNumber evidence="4 10 11 21 23 24 25">2.3.2.2</ecNumber>
    </alternativeName>
    <alternativeName>
        <fullName>Leukotriene-C4 hydrolase</fullName>
        <ecNumber evidence="10">3.4.19.14</ecNumber>
    </alternativeName>
    <cdAntigenName>CD224</cdAntigenName>
    <component>
        <recommendedName>
            <fullName>Glutathione hydrolase 1 heavy chain</fullName>
        </recommendedName>
    </component>
    <component>
        <recommendedName>
            <fullName>Glutathione hydrolase 1 light chain</fullName>
        </recommendedName>
    </component>
</protein>
<name>GGT1_HUMAN</name>
<proteinExistence type="evidence at protein level"/>
<feature type="chain" id="PRO_0000011058" description="Glutathione hydrolase 1 heavy chain">
    <location>
        <begin position="1"/>
        <end position="380"/>
    </location>
</feature>
<feature type="chain" id="PRO_0000011059" description="Glutathione hydrolase 1 light chain" evidence="19">
    <location>
        <begin position="381"/>
        <end position="569"/>
    </location>
</feature>
<feature type="topological domain" description="Cytoplasmic" evidence="1">
    <location>
        <begin position="1"/>
        <end position="4"/>
    </location>
</feature>
<feature type="transmembrane region" description="Helical; Signal-anchor for type II membrane protein" evidence="1">
    <location>
        <begin position="5"/>
        <end position="26"/>
    </location>
</feature>
<feature type="topological domain" description="Extracellular" evidence="1">
    <location>
        <begin position="27"/>
        <end position="569"/>
    </location>
</feature>
<feature type="active site" description="Nucleophile" evidence="4 15">
    <location>
        <position position="381"/>
    </location>
</feature>
<feature type="binding site" evidence="12">
    <location>
        <position position="107"/>
    </location>
    <ligand>
        <name>L-glutamate</name>
        <dbReference type="ChEBI" id="CHEBI:29985"/>
    </ligand>
</feature>
<feature type="binding site" evidence="12 15">
    <location>
        <begin position="399"/>
        <end position="401"/>
    </location>
    <ligand>
        <name>L-glutamate</name>
        <dbReference type="ChEBI" id="CHEBI:29985"/>
    </ligand>
</feature>
<feature type="binding site" evidence="15">
    <location>
        <position position="423"/>
    </location>
    <ligand>
        <name>L-glutamate</name>
        <dbReference type="ChEBI" id="CHEBI:29985"/>
    </ligand>
</feature>
<feature type="binding site" evidence="12 15">
    <location>
        <begin position="451"/>
        <end position="452"/>
    </location>
    <ligand>
        <name>L-glutamate</name>
        <dbReference type="ChEBI" id="CHEBI:29985"/>
    </ligand>
</feature>
<feature type="binding site" evidence="15">
    <location>
        <position position="474"/>
    </location>
    <ligand>
        <name>L-glutamate</name>
        <dbReference type="ChEBI" id="CHEBI:29985"/>
    </ligand>
</feature>
<feature type="glycosylation site" description="N-linked (GlcNAc...) asparagine" evidence="9 12 15">
    <location>
        <position position="95"/>
    </location>
</feature>
<feature type="glycosylation site" description="N-linked (GlcNAc...) asparagine" evidence="4 5 6 9 12 15">
    <location>
        <position position="120"/>
    </location>
</feature>
<feature type="glycosylation site" description="N-linked (GlcNAc...) asparagine" evidence="5 9 12 15">
    <location>
        <position position="230"/>
    </location>
</feature>
<feature type="glycosylation site" description="N-linked (GlcNAc...) asparagine" evidence="4 9 12 15">
    <location>
        <position position="266"/>
    </location>
</feature>
<feature type="glycosylation site" description="N-linked (GlcNAc...) asparagine" evidence="9">
    <location>
        <position position="297"/>
    </location>
</feature>
<feature type="glycosylation site" description="N-linked (GlcNAc...) asparagine" evidence="4 9 12 15">
    <location>
        <position position="344"/>
    </location>
</feature>
<feature type="glycosylation site" description="N-linked (GlcNAc...) asparagine" evidence="3 4 5 9 12 15">
    <location>
        <position position="511"/>
    </location>
</feature>
<feature type="disulfide bond" evidence="12">
    <location>
        <begin position="50"/>
        <end position="74"/>
    </location>
</feature>
<feature type="disulfide bond" evidence="12">
    <location>
        <begin position="192"/>
        <end position="196"/>
    </location>
</feature>
<feature type="splice variant" id="VSP_008132" description="In isoform 3." evidence="27 29">
    <location>
        <begin position="1"/>
        <end position="344"/>
    </location>
</feature>
<feature type="splice variant" id="VSP_001746" description="In isoform 2." evidence="28">
    <original>VVRNMTSEFFAAQLRAQISDDTTHPI</original>
    <variation>ASSGVSAGGPQHDLRVLRCPAPGPDL</variation>
    <location>
        <begin position="341"/>
        <end position="366"/>
    </location>
</feature>
<feature type="splice variant" id="VSP_001747" description="In isoform 2." evidence="28">
    <location>
        <begin position="367"/>
        <end position="569"/>
    </location>
</feature>
<feature type="sequence variant" id="VAR_025545" description="In dbSNP:rs2330837.">
    <original>S</original>
    <variation>L</variation>
    <location>
        <position position="51"/>
    </location>
</feature>
<feature type="sequence variant" id="VAR_018373" description="In dbSNP:rs2330838.">
    <original>K</original>
    <variation>E</variation>
    <location>
        <position position="52"/>
    </location>
</feature>
<feature type="sequence variant" id="VAR_018374" description="In dbSNP:rs3895576.">
    <original>A</original>
    <variation>V</variation>
    <location>
        <position position="177"/>
    </location>
</feature>
<feature type="sequence variant" id="VAR_018372" description="In dbSNP:rs4049829." evidence="2 8 13 14 18 19">
    <original>V</original>
    <variation>A</variation>
    <location>
        <position position="272"/>
    </location>
</feature>
<feature type="sequence variant" id="VAR_025546" description="In dbSNP:rs17004876.">
    <original>N</original>
    <variation>D</variation>
    <location>
        <position position="419"/>
    </location>
</feature>
<feature type="sequence variant" id="VAR_049181" description="In dbSNP:rs1062459.">
    <original>V</original>
    <variation>A</variation>
    <location>
        <position position="435"/>
    </location>
</feature>
<feature type="mutagenesis site" description="No effect on gamma-glutamyltranspeptidase activity." evidence="24">
    <original>K</original>
    <variation>N</variation>
    <location>
        <position position="100"/>
    </location>
</feature>
<feature type="mutagenesis site" description="No effect on gamma-glutamyltranspeptidase activity." evidence="24">
    <original>E</original>
    <variation>Q</variation>
    <location>
        <position position="102"/>
    </location>
</feature>
<feature type="mutagenesis site" description="Reduces enzyme gamma-glutamyltranspeptidase activity by 99%." evidence="24">
    <original>R</original>
    <variation>K</variation>
    <location>
        <position position="107"/>
    </location>
</feature>
<feature type="mutagenesis site" description="Abolishes gamma-glutamyltranspeptidase activity." evidence="24">
    <original>R</original>
    <variation>Q</variation>
    <variation>H</variation>
    <location>
        <position position="107"/>
    </location>
</feature>
<feature type="mutagenesis site" description="Reduces gamma-glutamyltranspeptidase activity by 98%." evidence="24">
    <original>E</original>
    <variation>Q</variation>
    <location>
        <position position="108"/>
    </location>
</feature>
<feature type="mutagenesis site" description="No effect on gamma-glutamyltranspeptidase activity." evidence="24">
    <original>R</original>
    <variation>Q</variation>
    <location>
        <position position="112"/>
    </location>
</feature>
<feature type="mutagenesis site" description="No effect on gamma-glutamyltranspeptidase activity." evidence="24">
    <original>R</original>
    <variation>Q</variation>
    <location>
        <position position="139"/>
    </location>
</feature>
<feature type="mutagenesis site" description="No effect on gamma-glutamyltranspeptidase activity." evidence="24">
    <original>R</original>
    <variation>Q</variation>
    <location>
        <position position="147"/>
    </location>
</feature>
<feature type="mutagenesis site" description="No effect on gamma-glutamyltranspeptidase activity." evidence="24">
    <original>R</original>
    <variation>Q</variation>
    <location>
        <position position="150"/>
    </location>
</feature>
<feature type="mutagenesis site" description="Loss of autocatalytic cleavage, cell membrane localization and decrease in gamma-glutamyltranspeptidase activity; when associated with Y-193." evidence="11">
    <original>C</original>
    <variation>W</variation>
    <location>
        <position position="192"/>
    </location>
</feature>
<feature type="mutagenesis site" description="Loss of autocatalytic cleavage, cell membrane localization and decrease in gamma-glutamyltranspeptidase activity; when associated with W-192." evidence="11">
    <original>E</original>
    <variation>Y</variation>
    <location>
        <position position="193"/>
    </location>
</feature>
<feature type="mutagenesis site" description="Reduces gamma-glutamyltranspeptidase activity by 66%." evidence="25">
    <original>H</original>
    <variation>A</variation>
    <location>
        <position position="383"/>
    </location>
</feature>
<feature type="mutagenesis site" description="No effect on gamma-glutamyltranspeptidase activity." evidence="21">
    <original>S</original>
    <variation>A</variation>
    <location>
        <position position="385"/>
    </location>
</feature>
<feature type="mutagenesis site" description="No effect on gamma-glutamyltranspeptidase activity." evidence="21">
    <original>S</original>
    <variation>A</variation>
    <location>
        <position position="413"/>
    </location>
</feature>
<feature type="mutagenesis site" description="Reduces enzyme gamma-glutamyltranspeptidase activity by 90%." evidence="23">
    <original>D</original>
    <variation>A</variation>
    <location>
        <position position="422"/>
    </location>
</feature>
<feature type="mutagenesis site" description="Abolishes gamma-glutamyltranspeptidase activity. Increases KM for D-gamma-glutamyl-p-nitroanalide by over 1000-fold." evidence="23">
    <original>D</original>
    <variation>A</variation>
    <location>
        <position position="423"/>
    </location>
</feature>
<feature type="mutagenesis site" description="No effect on gamma-glutamyltranspeptidase activity." evidence="21">
    <original>S</original>
    <variation>A</variation>
    <location>
        <position position="425"/>
    </location>
</feature>
<feature type="mutagenesis site" description="Reduces gamma-glutamyltranspeptidase activity by 99%. Abolishes activity; when associated with A-452." evidence="21">
    <original>S</original>
    <variation>A</variation>
    <location>
        <position position="451"/>
    </location>
</feature>
<feature type="mutagenesis site" description="Reduces gamma-glutamyltranspeptidase activity by 99%. Abolishes activity; when associated with A-451." evidence="21">
    <original>S</original>
    <variation>A</variation>
    <location>
        <position position="452"/>
    </location>
</feature>
<feature type="mutagenesis site" description="No effect on gamma-glutamyltranspeptidase activity." evidence="23">
    <original>C</original>
    <variation>A</variation>
    <location>
        <position position="454"/>
    </location>
</feature>
<feature type="mutagenesis site" description="Reduces gamma-glutamyltranspeptidase activity by 90%." evidence="25">
    <original>H</original>
    <variation>A</variation>
    <location>
        <position position="505"/>
    </location>
</feature>
<feature type="mutagenesis site" description="Reduces enzyme activity by 97%." evidence="12">
    <original>Q</original>
    <variation>K</variation>
    <location>
        <position position="545"/>
    </location>
</feature>
<feature type="sequence conflict" description="In Ref. 11; AA sequence." evidence="30" ref="11">
    <original>SK</original>
    <variation>KS</variation>
    <location>
        <begin position="30"/>
        <end position="31"/>
    </location>
</feature>
<feature type="sequence conflict" description="In Ref. 11; AA sequence." evidence="30" ref="11">
    <original>A</original>
    <variation>K</variation>
    <location>
        <position position="47"/>
    </location>
</feature>
<feature type="sequence conflict" description="In Ref. 5; AAA35889." evidence="30" ref="5">
    <original>R</original>
    <variation>E</variation>
    <location>
        <position position="139"/>
    </location>
</feature>
<feature type="sequence conflict" description="In Ref. 10; AAI28240." evidence="30" ref="10">
    <original>A</original>
    <variation>S</variation>
    <location>
        <position position="356"/>
    </location>
</feature>
<feature type="sequence conflict" description="In Ref. 10; AAI28240." evidence="30" ref="10">
    <original>D</original>
    <variation>H</variation>
    <location>
        <position position="361"/>
    </location>
</feature>
<feature type="sequence conflict" description="In Ref. 7; AAA02886." evidence="30" ref="7">
    <original>E</original>
    <variation>D</variation>
    <location>
        <position position="372"/>
    </location>
</feature>
<feature type="strand" evidence="39">
    <location>
        <begin position="36"/>
        <end position="40"/>
    </location>
</feature>
<feature type="strand" evidence="39">
    <location>
        <begin position="42"/>
        <end position="44"/>
    </location>
</feature>
<feature type="helix" evidence="39">
    <location>
        <begin position="48"/>
        <end position="59"/>
    </location>
</feature>
<feature type="helix" evidence="39">
    <location>
        <begin position="64"/>
        <end position="78"/>
    </location>
</feature>
<feature type="turn" evidence="39">
    <location>
        <begin position="79"/>
        <end position="82"/>
    </location>
</feature>
<feature type="strand" evidence="39">
    <location>
        <begin position="87"/>
        <end position="95"/>
    </location>
</feature>
<feature type="turn" evidence="39">
    <location>
        <begin position="96"/>
        <end position="99"/>
    </location>
</feature>
<feature type="strand" evidence="39">
    <location>
        <begin position="100"/>
        <end position="106"/>
    </location>
</feature>
<feature type="helix" evidence="39">
    <location>
        <begin position="122"/>
        <end position="126"/>
    </location>
</feature>
<feature type="helix" evidence="39">
    <location>
        <begin position="129"/>
        <end position="131"/>
    </location>
</feature>
<feature type="helix" evidence="39">
    <location>
        <begin position="137"/>
        <end position="148"/>
    </location>
</feature>
<feature type="helix" evidence="39">
    <location>
        <begin position="153"/>
        <end position="166"/>
    </location>
</feature>
<feature type="helix" evidence="39">
    <location>
        <begin position="172"/>
        <end position="180"/>
    </location>
</feature>
<feature type="helix" evidence="39">
    <location>
        <begin position="182"/>
        <end position="187"/>
    </location>
</feature>
<feature type="helix" evidence="39">
    <location>
        <begin position="189"/>
        <end position="195"/>
    </location>
</feature>
<feature type="strand" evidence="39">
    <location>
        <begin position="206"/>
        <end position="208"/>
    </location>
</feature>
<feature type="helix" evidence="39">
    <location>
        <begin position="211"/>
        <end position="223"/>
    </location>
</feature>
<feature type="helix" evidence="39">
    <location>
        <begin position="226"/>
        <end position="229"/>
    </location>
</feature>
<feature type="helix" evidence="39">
    <location>
        <begin position="234"/>
        <end position="243"/>
    </location>
</feature>
<feature type="helix" evidence="39">
    <location>
        <begin position="250"/>
        <end position="255"/>
    </location>
</feature>
<feature type="strand" evidence="39">
    <location>
        <begin position="259"/>
        <end position="263"/>
    </location>
</feature>
<feature type="strand" evidence="39">
    <location>
        <begin position="265"/>
        <end position="269"/>
    </location>
</feature>
<feature type="strand" evidence="39">
    <location>
        <begin position="272"/>
        <end position="276"/>
    </location>
</feature>
<feature type="helix" evidence="39">
    <location>
        <begin position="283"/>
        <end position="294"/>
    </location>
</feature>
<feature type="helix" evidence="39">
    <location>
        <begin position="300"/>
        <end position="303"/>
    </location>
</feature>
<feature type="helix" evidence="39">
    <location>
        <begin position="306"/>
        <end position="327"/>
    </location>
</feature>
<feature type="turn" evidence="39">
    <location>
        <begin position="333"/>
        <end position="335"/>
    </location>
</feature>
<feature type="helix" evidence="39">
    <location>
        <begin position="339"/>
        <end position="345"/>
    </location>
</feature>
<feature type="helix" evidence="39">
    <location>
        <begin position="348"/>
        <end position="355"/>
    </location>
</feature>
<feature type="helix" evidence="39">
    <location>
        <begin position="366"/>
        <end position="369"/>
    </location>
</feature>
<feature type="strand" evidence="39">
    <location>
        <begin position="382"/>
        <end position="387"/>
    </location>
</feature>
<feature type="strand" evidence="39">
    <location>
        <begin position="393"/>
        <end position="399"/>
    </location>
</feature>
<feature type="turn" evidence="39">
    <location>
        <begin position="403"/>
        <end position="406"/>
    </location>
</feature>
<feature type="strand" evidence="41">
    <location>
        <begin position="407"/>
        <end position="409"/>
    </location>
</feature>
<feature type="turn" evidence="39">
    <location>
        <begin position="411"/>
        <end position="413"/>
    </location>
</feature>
<feature type="helix" evidence="39">
    <location>
        <begin position="420"/>
        <end position="423"/>
    </location>
</feature>
<feature type="strand" evidence="42">
    <location>
        <begin position="427"/>
        <end position="429"/>
    </location>
</feature>
<feature type="strand" evidence="40">
    <location>
        <begin position="432"/>
        <end position="434"/>
    </location>
</feature>
<feature type="helix" evidence="39">
    <location>
        <begin position="439"/>
        <end position="441"/>
    </location>
</feature>
<feature type="strand" evidence="39">
    <location>
        <begin position="456"/>
        <end position="460"/>
    </location>
</feature>
<feature type="strand" evidence="39">
    <location>
        <begin position="465"/>
        <end position="476"/>
    </location>
</feature>
<feature type="helix" evidence="39">
    <location>
        <begin position="477"/>
        <end position="489"/>
    </location>
</feature>
<feature type="helix" evidence="39">
    <location>
        <begin position="495"/>
        <end position="500"/>
    </location>
</feature>
<feature type="strand" evidence="39">
    <location>
        <begin position="508"/>
        <end position="511"/>
    </location>
</feature>
<feature type="strand" evidence="39">
    <location>
        <begin position="513"/>
        <end position="515"/>
    </location>
</feature>
<feature type="helix" evidence="39">
    <location>
        <begin position="521"/>
        <end position="529"/>
    </location>
</feature>
<feature type="strand" evidence="39">
    <location>
        <begin position="534"/>
        <end position="536"/>
    </location>
</feature>
<feature type="strand" evidence="39">
    <location>
        <begin position="543"/>
        <end position="550"/>
    </location>
</feature>
<feature type="strand" evidence="39">
    <location>
        <begin position="553"/>
        <end position="557"/>
    </location>
</feature>
<feature type="turn" evidence="39">
    <location>
        <begin position="560"/>
        <end position="562"/>
    </location>
</feature>